<name>RL11_RUBXD</name>
<comment type="function">
    <text evidence="1">Forms part of the ribosomal stalk which helps the ribosome interact with GTP-bound translation factors.</text>
</comment>
<comment type="subunit">
    <text evidence="1">Part of the ribosomal stalk of the 50S ribosomal subunit. Interacts with L10 and the large rRNA to form the base of the stalk. L10 forms an elongated spine to which L12 dimers bind in a sequential fashion forming a multimeric L10(L12)X complex.</text>
</comment>
<comment type="PTM">
    <text evidence="1">One or more lysine residues are methylated.</text>
</comment>
<comment type="similarity">
    <text evidence="1">Belongs to the universal ribosomal protein uL11 family.</text>
</comment>
<reference key="1">
    <citation type="submission" date="2006-06" db="EMBL/GenBank/DDBJ databases">
        <title>Complete sequence of Rubrobacter xylanophilus DSM 9941.</title>
        <authorList>
            <consortium name="US DOE Joint Genome Institute"/>
            <person name="Copeland A."/>
            <person name="Lucas S."/>
            <person name="Lapidus A."/>
            <person name="Barry K."/>
            <person name="Detter J.C."/>
            <person name="Glavina del Rio T."/>
            <person name="Hammon N."/>
            <person name="Israni S."/>
            <person name="Dalin E."/>
            <person name="Tice H."/>
            <person name="Pitluck S."/>
            <person name="Munk A.C."/>
            <person name="Brettin T."/>
            <person name="Bruce D."/>
            <person name="Han C."/>
            <person name="Tapia R."/>
            <person name="Gilna P."/>
            <person name="Schmutz J."/>
            <person name="Larimer F."/>
            <person name="Land M."/>
            <person name="Hauser L."/>
            <person name="Kyrpides N."/>
            <person name="Lykidis A."/>
            <person name="da Costa M.S."/>
            <person name="Rainey F.A."/>
            <person name="Empadinhas N."/>
            <person name="Jolivet E."/>
            <person name="Battista J.R."/>
            <person name="Richardson P."/>
        </authorList>
    </citation>
    <scope>NUCLEOTIDE SEQUENCE [LARGE SCALE GENOMIC DNA]</scope>
    <source>
        <strain>DSM 9941 / JCM 11954 / NBRC 16129 / PRD-1</strain>
    </source>
</reference>
<evidence type="ECO:0000255" key="1">
    <source>
        <dbReference type="HAMAP-Rule" id="MF_00736"/>
    </source>
</evidence>
<evidence type="ECO:0000305" key="2"/>
<feature type="chain" id="PRO_0000258206" description="Large ribosomal subunit protein uL11">
    <location>
        <begin position="1"/>
        <end position="145"/>
    </location>
</feature>
<proteinExistence type="inferred from homology"/>
<protein>
    <recommendedName>
        <fullName evidence="1">Large ribosomal subunit protein uL11</fullName>
    </recommendedName>
    <alternativeName>
        <fullName evidence="2">50S ribosomal protein L11</fullName>
    </alternativeName>
</protein>
<sequence>MGRGRGKRVVRKLKLQIPGGQANPAPPVGPALGQAQVNIGEFVRQFNDATRDRMGQLIPVEITVYEDRSFTFVTKTPPAAFLLKQAAGVEKGSGEPNRSAAGRVSRAQVEEIARTKMPDLNAADVEAAVKIIEGTARSMGIKVEQ</sequence>
<keyword id="KW-0488">Methylation</keyword>
<keyword id="KW-1185">Reference proteome</keyword>
<keyword id="KW-0687">Ribonucleoprotein</keyword>
<keyword id="KW-0689">Ribosomal protein</keyword>
<keyword id="KW-0694">RNA-binding</keyword>
<keyword id="KW-0699">rRNA-binding</keyword>
<organism>
    <name type="scientific">Rubrobacter xylanophilus (strain DSM 9941 / JCM 11954 / NBRC 16129 / PRD-1)</name>
    <dbReference type="NCBI Taxonomy" id="266117"/>
    <lineage>
        <taxon>Bacteria</taxon>
        <taxon>Bacillati</taxon>
        <taxon>Actinomycetota</taxon>
        <taxon>Rubrobacteria</taxon>
        <taxon>Rubrobacterales</taxon>
        <taxon>Rubrobacteraceae</taxon>
        <taxon>Rubrobacter</taxon>
    </lineage>
</organism>
<dbReference type="EMBL" id="CP000386">
    <property type="protein sequence ID" value="ABG05110.1"/>
    <property type="molecule type" value="Genomic_DNA"/>
</dbReference>
<dbReference type="RefSeq" id="WP_011565125.1">
    <property type="nucleotide sequence ID" value="NC_008148.1"/>
</dbReference>
<dbReference type="SMR" id="Q1AU18"/>
<dbReference type="STRING" id="266117.Rxyl_2166"/>
<dbReference type="KEGG" id="rxy:Rxyl_2166"/>
<dbReference type="eggNOG" id="COG0080">
    <property type="taxonomic scope" value="Bacteria"/>
</dbReference>
<dbReference type="HOGENOM" id="CLU_074237_2_1_11"/>
<dbReference type="OrthoDB" id="9802408at2"/>
<dbReference type="PhylomeDB" id="Q1AU18"/>
<dbReference type="Proteomes" id="UP000006637">
    <property type="component" value="Chromosome"/>
</dbReference>
<dbReference type="GO" id="GO:0022625">
    <property type="term" value="C:cytosolic large ribosomal subunit"/>
    <property type="evidence" value="ECO:0007669"/>
    <property type="project" value="TreeGrafter"/>
</dbReference>
<dbReference type="GO" id="GO:0070180">
    <property type="term" value="F:large ribosomal subunit rRNA binding"/>
    <property type="evidence" value="ECO:0007669"/>
    <property type="project" value="UniProtKB-UniRule"/>
</dbReference>
<dbReference type="GO" id="GO:0003735">
    <property type="term" value="F:structural constituent of ribosome"/>
    <property type="evidence" value="ECO:0007669"/>
    <property type="project" value="InterPro"/>
</dbReference>
<dbReference type="GO" id="GO:0006412">
    <property type="term" value="P:translation"/>
    <property type="evidence" value="ECO:0007669"/>
    <property type="project" value="UniProtKB-UniRule"/>
</dbReference>
<dbReference type="CDD" id="cd00349">
    <property type="entry name" value="Ribosomal_L11"/>
    <property type="match status" value="1"/>
</dbReference>
<dbReference type="FunFam" id="1.10.10.250:FF:000001">
    <property type="entry name" value="50S ribosomal protein L11"/>
    <property type="match status" value="1"/>
</dbReference>
<dbReference type="Gene3D" id="1.10.10.250">
    <property type="entry name" value="Ribosomal protein L11, C-terminal domain"/>
    <property type="match status" value="1"/>
</dbReference>
<dbReference type="Gene3D" id="3.30.1550.10">
    <property type="entry name" value="Ribosomal protein L11/L12, N-terminal domain"/>
    <property type="match status" value="1"/>
</dbReference>
<dbReference type="HAMAP" id="MF_00736">
    <property type="entry name" value="Ribosomal_uL11"/>
    <property type="match status" value="1"/>
</dbReference>
<dbReference type="InterPro" id="IPR000911">
    <property type="entry name" value="Ribosomal_uL11"/>
</dbReference>
<dbReference type="InterPro" id="IPR006519">
    <property type="entry name" value="Ribosomal_uL11_bac-typ"/>
</dbReference>
<dbReference type="InterPro" id="IPR020783">
    <property type="entry name" value="Ribosomal_uL11_C"/>
</dbReference>
<dbReference type="InterPro" id="IPR036769">
    <property type="entry name" value="Ribosomal_uL11_C_sf"/>
</dbReference>
<dbReference type="InterPro" id="IPR020785">
    <property type="entry name" value="Ribosomal_uL11_CS"/>
</dbReference>
<dbReference type="InterPro" id="IPR020784">
    <property type="entry name" value="Ribosomal_uL11_N"/>
</dbReference>
<dbReference type="InterPro" id="IPR036796">
    <property type="entry name" value="Ribosomal_uL11_N_sf"/>
</dbReference>
<dbReference type="NCBIfam" id="TIGR01632">
    <property type="entry name" value="L11_bact"/>
    <property type="match status" value="1"/>
</dbReference>
<dbReference type="PANTHER" id="PTHR11661">
    <property type="entry name" value="60S RIBOSOMAL PROTEIN L12"/>
    <property type="match status" value="1"/>
</dbReference>
<dbReference type="PANTHER" id="PTHR11661:SF1">
    <property type="entry name" value="LARGE RIBOSOMAL SUBUNIT PROTEIN UL11M"/>
    <property type="match status" value="1"/>
</dbReference>
<dbReference type="Pfam" id="PF00298">
    <property type="entry name" value="Ribosomal_L11"/>
    <property type="match status" value="1"/>
</dbReference>
<dbReference type="Pfam" id="PF03946">
    <property type="entry name" value="Ribosomal_L11_N"/>
    <property type="match status" value="1"/>
</dbReference>
<dbReference type="SMART" id="SM00649">
    <property type="entry name" value="RL11"/>
    <property type="match status" value="1"/>
</dbReference>
<dbReference type="SUPFAM" id="SSF54747">
    <property type="entry name" value="Ribosomal L11/L12e N-terminal domain"/>
    <property type="match status" value="1"/>
</dbReference>
<dbReference type="SUPFAM" id="SSF46906">
    <property type="entry name" value="Ribosomal protein L11, C-terminal domain"/>
    <property type="match status" value="1"/>
</dbReference>
<dbReference type="PROSITE" id="PS00359">
    <property type="entry name" value="RIBOSOMAL_L11"/>
    <property type="match status" value="1"/>
</dbReference>
<gene>
    <name evidence="1" type="primary">rplK</name>
    <name type="ordered locus">Rxyl_2166</name>
</gene>
<accession>Q1AU18</accession>